<organism>
    <name type="scientific">Klebsiella pneumoniae subsp. pneumoniae (strain ATCC 700721 / MGH 78578)</name>
    <dbReference type="NCBI Taxonomy" id="272620"/>
    <lineage>
        <taxon>Bacteria</taxon>
        <taxon>Pseudomonadati</taxon>
        <taxon>Pseudomonadota</taxon>
        <taxon>Gammaproteobacteria</taxon>
        <taxon>Enterobacterales</taxon>
        <taxon>Enterobacteriaceae</taxon>
        <taxon>Klebsiella/Raoultella group</taxon>
        <taxon>Klebsiella</taxon>
        <taxon>Klebsiella pneumoniae complex</taxon>
    </lineage>
</organism>
<accession>A6TEB8</accession>
<reference key="1">
    <citation type="submission" date="2006-09" db="EMBL/GenBank/DDBJ databases">
        <authorList>
            <consortium name="The Klebsiella pneumonia Genome Sequencing Project"/>
            <person name="McClelland M."/>
            <person name="Sanderson E.K."/>
            <person name="Spieth J."/>
            <person name="Clifton W.S."/>
            <person name="Latreille P."/>
            <person name="Sabo A."/>
            <person name="Pepin K."/>
            <person name="Bhonagiri V."/>
            <person name="Porwollik S."/>
            <person name="Ali J."/>
            <person name="Wilson R.K."/>
        </authorList>
    </citation>
    <scope>NUCLEOTIDE SEQUENCE [LARGE SCALE GENOMIC DNA]</scope>
    <source>
        <strain>ATCC 700721 / MGH 78578</strain>
    </source>
</reference>
<dbReference type="EC" id="7.6.2.13" evidence="1"/>
<dbReference type="EMBL" id="CP000647">
    <property type="protein sequence ID" value="ABR78902.1"/>
    <property type="molecule type" value="Genomic_DNA"/>
</dbReference>
<dbReference type="SMR" id="A6TEB8"/>
<dbReference type="STRING" id="272620.KPN_03507"/>
<dbReference type="PaxDb" id="272620-KPN_03507"/>
<dbReference type="EnsemblBacteria" id="ABR78902">
    <property type="protein sequence ID" value="ABR78902"/>
    <property type="gene ID" value="KPN_03507"/>
</dbReference>
<dbReference type="KEGG" id="kpn:KPN_03507"/>
<dbReference type="HOGENOM" id="CLU_000604_92_3_6"/>
<dbReference type="Proteomes" id="UP000000265">
    <property type="component" value="Chromosome"/>
</dbReference>
<dbReference type="GO" id="GO:0005886">
    <property type="term" value="C:plasma membrane"/>
    <property type="evidence" value="ECO:0007669"/>
    <property type="project" value="UniProtKB-SubCell"/>
</dbReference>
<dbReference type="GO" id="GO:0005524">
    <property type="term" value="F:ATP binding"/>
    <property type="evidence" value="ECO:0007669"/>
    <property type="project" value="UniProtKB-KW"/>
</dbReference>
<dbReference type="GO" id="GO:0016887">
    <property type="term" value="F:ATP hydrolysis activity"/>
    <property type="evidence" value="ECO:0007669"/>
    <property type="project" value="InterPro"/>
</dbReference>
<dbReference type="CDD" id="cd03216">
    <property type="entry name" value="ABC_Carb_Monos_I"/>
    <property type="match status" value="1"/>
</dbReference>
<dbReference type="CDD" id="cd03215">
    <property type="entry name" value="ABC_Carb_Monos_II"/>
    <property type="match status" value="1"/>
</dbReference>
<dbReference type="Gene3D" id="3.40.50.300">
    <property type="entry name" value="P-loop containing nucleotide triphosphate hydrolases"/>
    <property type="match status" value="2"/>
</dbReference>
<dbReference type="InterPro" id="IPR003593">
    <property type="entry name" value="AAA+_ATPase"/>
</dbReference>
<dbReference type="InterPro" id="IPR050107">
    <property type="entry name" value="ABC_carbohydrate_import_ATPase"/>
</dbReference>
<dbReference type="InterPro" id="IPR003439">
    <property type="entry name" value="ABC_transporter-like_ATP-bd"/>
</dbReference>
<dbReference type="InterPro" id="IPR017871">
    <property type="entry name" value="ABC_transporter-like_CS"/>
</dbReference>
<dbReference type="InterPro" id="IPR027417">
    <property type="entry name" value="P-loop_NTPase"/>
</dbReference>
<dbReference type="NCBIfam" id="NF011967">
    <property type="entry name" value="PRK15439.1"/>
    <property type="match status" value="1"/>
</dbReference>
<dbReference type="PANTHER" id="PTHR43790:SF2">
    <property type="entry name" value="AUTOINDUCER 2 IMPORT ATP-BINDING PROTEIN LSRA"/>
    <property type="match status" value="1"/>
</dbReference>
<dbReference type="PANTHER" id="PTHR43790">
    <property type="entry name" value="CARBOHYDRATE TRANSPORT ATP-BINDING PROTEIN MG119-RELATED"/>
    <property type="match status" value="1"/>
</dbReference>
<dbReference type="Pfam" id="PF00005">
    <property type="entry name" value="ABC_tran"/>
    <property type="match status" value="2"/>
</dbReference>
<dbReference type="SMART" id="SM00382">
    <property type="entry name" value="AAA"/>
    <property type="match status" value="2"/>
</dbReference>
<dbReference type="SUPFAM" id="SSF52540">
    <property type="entry name" value="P-loop containing nucleoside triphosphate hydrolases"/>
    <property type="match status" value="2"/>
</dbReference>
<dbReference type="PROSITE" id="PS00211">
    <property type="entry name" value="ABC_TRANSPORTER_1"/>
    <property type="match status" value="1"/>
</dbReference>
<dbReference type="PROSITE" id="PS50893">
    <property type="entry name" value="ABC_TRANSPORTER_2"/>
    <property type="match status" value="2"/>
</dbReference>
<protein>
    <recommendedName>
        <fullName evidence="1">Autoinducer 2 import ATP-binding protein LsrA</fullName>
        <shortName evidence="1">AI-2 import ATP-binding protein LsrA</shortName>
        <ecNumber evidence="1">7.6.2.13</ecNumber>
    </recommendedName>
</protein>
<evidence type="ECO:0000250" key="1">
    <source>
        <dbReference type="UniProtKB" id="P77257"/>
    </source>
</evidence>
<evidence type="ECO:0000255" key="2">
    <source>
        <dbReference type="PROSITE-ProRule" id="PRU00434"/>
    </source>
</evidence>
<evidence type="ECO:0000305" key="3"/>
<gene>
    <name type="primary">lsrA</name>
    <name type="ordered locus">KPN78578_34780</name>
    <name type="ORF">KPN_03507</name>
</gene>
<feature type="chain" id="PRO_0000351296" description="Autoinducer 2 import ATP-binding protein LsrA">
    <location>
        <begin position="1"/>
        <end position="496"/>
    </location>
</feature>
<feature type="domain" description="ABC transporter 1" evidence="2">
    <location>
        <begin position="6"/>
        <end position="234"/>
    </location>
</feature>
<feature type="domain" description="ABC transporter 2" evidence="2">
    <location>
        <begin position="255"/>
        <end position="495"/>
    </location>
</feature>
<feature type="binding site" evidence="2">
    <location>
        <begin position="38"/>
        <end position="45"/>
    </location>
    <ligand>
        <name>ATP</name>
        <dbReference type="ChEBI" id="CHEBI:30616"/>
    </ligand>
</feature>
<keyword id="KW-0067">ATP-binding</keyword>
<keyword id="KW-0997">Cell inner membrane</keyword>
<keyword id="KW-1003">Cell membrane</keyword>
<keyword id="KW-0472">Membrane</keyword>
<keyword id="KW-0547">Nucleotide-binding</keyword>
<keyword id="KW-0677">Repeat</keyword>
<keyword id="KW-1278">Translocase</keyword>
<keyword id="KW-0813">Transport</keyword>
<comment type="function">
    <text evidence="1">Part of the ABC transporter complex LsrABCD involved in autoinducer 2 (AI-2) import. Responsible for energy coupling to the transport system.</text>
</comment>
<comment type="catalytic activity">
    <reaction evidence="1">
        <text>ATP + H2O + (2R,4S)-2-methyl-2,3,3,4-tetrahydroxytetrahydrofuran-[AI-2-binding protein]Side 1 = ADP + phosphate + (2R,4S)-2-methyl-2,3,3,4-tetrahydroxytetrahydrofuranSide 2 + [AI-2-binding protein]Side 1.</text>
        <dbReference type="EC" id="7.6.2.13"/>
    </reaction>
</comment>
<comment type="subunit">
    <text evidence="1">The complex is composed of two ATP-binding proteins (LsrA), two transmembrane proteins (LsrC and LsrD) and a solute-binding protein (LsrB).</text>
</comment>
<comment type="subcellular location">
    <subcellularLocation>
        <location evidence="1">Cell inner membrane</location>
        <topology evidence="1">Peripheral membrane protein</topology>
    </subcellularLocation>
</comment>
<comment type="similarity">
    <text evidence="3">Belongs to the ABC transporter superfamily. AI-2 autoinducer porter (TC 3.A.1.2.8) family.</text>
</comment>
<sequence length="496" mass="54456">MMKPLLEARQICKQFSGVAVLKGIDFTLGAGQVHALMGGNGAGKSTLMKIIAGVETPDSGELTIGERAFARLNPALAHQLGIYLVPQEPMLFPNLSVRENILFRLPKRADTAARLQDKLQQLNCQINLDASASTLEVADQQMVEILRGLMREARILILDEPTASLTPGETERLFSQIRALQALDVGIVFISHKLPEIRQLASHISVMRDGAVVLSGETAAYRDEQLINAMTPVSRDHALSDTQKLWLSLPGNRRTQPQDFPVLRVEDLTGEGFIDLNLEIRAGEIVGLAGLVGSGRTEFAETLYGLRTPRAGRIWLENREISCDSTRGRLASGLVYLPEDRQVSGLFLDAPVRWNTVMFNQPSWWQQGKREAAVVERYHRALGIKLADGDQPVRTLSGGNQQKVLLARCLEANPLLLIVDEPTRGVDVSARADIYQLLKSVAAQNVAVLMISSDVDEFVGLADRVLVMHQGRYSGELARQAVTVDRMMTLAFGGQA</sequence>
<proteinExistence type="inferred from homology"/>
<name>LSRA_KLEP7</name>